<dbReference type="PIR" id="S23289">
    <property type="entry name" value="S23289"/>
</dbReference>
<dbReference type="SMR" id="P80101"/>
<dbReference type="STRING" id="349124.Hhal_1606"/>
<dbReference type="GO" id="GO:0019866">
    <property type="term" value="C:organelle inner membrane"/>
    <property type="evidence" value="ECO:0007669"/>
    <property type="project" value="InterPro"/>
</dbReference>
<dbReference type="GO" id="GO:0005886">
    <property type="term" value="C:plasma membrane"/>
    <property type="evidence" value="ECO:0007669"/>
    <property type="project" value="UniProtKB-SubCell"/>
</dbReference>
<dbReference type="GO" id="GO:0030077">
    <property type="term" value="C:plasma membrane light-harvesting complex"/>
    <property type="evidence" value="ECO:0007669"/>
    <property type="project" value="InterPro"/>
</dbReference>
<dbReference type="GO" id="GO:0042314">
    <property type="term" value="F:bacteriochlorophyll binding"/>
    <property type="evidence" value="ECO:0007669"/>
    <property type="project" value="UniProtKB-KW"/>
</dbReference>
<dbReference type="GO" id="GO:0045156">
    <property type="term" value="F:electron transporter, transferring electrons within the cyclic electron transport pathway of photosynthesis activity"/>
    <property type="evidence" value="ECO:0007669"/>
    <property type="project" value="InterPro"/>
</dbReference>
<dbReference type="GO" id="GO:0046872">
    <property type="term" value="F:metal ion binding"/>
    <property type="evidence" value="ECO:0007669"/>
    <property type="project" value="UniProtKB-KW"/>
</dbReference>
<dbReference type="GO" id="GO:0019684">
    <property type="term" value="P:photosynthesis, light reaction"/>
    <property type="evidence" value="ECO:0007669"/>
    <property type="project" value="InterPro"/>
</dbReference>
<dbReference type="Gene3D" id="4.10.220.20">
    <property type="entry name" value="Light-harvesting complex"/>
    <property type="match status" value="1"/>
</dbReference>
<dbReference type="InterPro" id="IPR000066">
    <property type="entry name" value="Antenna_a/b"/>
</dbReference>
<dbReference type="InterPro" id="IPR018332">
    <property type="entry name" value="Antenna_alpha"/>
</dbReference>
<dbReference type="InterPro" id="IPR002361">
    <property type="entry name" value="Antenna_alpha_CS"/>
</dbReference>
<dbReference type="InterPro" id="IPR035889">
    <property type="entry name" value="Light-harvesting_complex"/>
</dbReference>
<dbReference type="NCBIfam" id="NF040861">
    <property type="entry name" value="pufA_517_ASD"/>
    <property type="match status" value="1"/>
</dbReference>
<dbReference type="Pfam" id="PF00556">
    <property type="entry name" value="LHC"/>
    <property type="match status" value="1"/>
</dbReference>
<dbReference type="PRINTS" id="PR00673">
    <property type="entry name" value="LIGHTHARVSTA"/>
</dbReference>
<dbReference type="SUPFAM" id="SSF56918">
    <property type="entry name" value="Light-harvesting complex subunits"/>
    <property type="match status" value="1"/>
</dbReference>
<dbReference type="PROSITE" id="PS00968">
    <property type="entry name" value="ANTENNA_COMP_ALPHA"/>
    <property type="match status" value="1"/>
</dbReference>
<feature type="chain" id="PRO_0000099779" description="Light-harvesting protein B800/850/890 alpha-2 chain">
    <location>
        <begin position="1"/>
        <end position="47" status="greater than"/>
    </location>
</feature>
<feature type="topological domain" description="Cytoplasmic" evidence="1">
    <location>
        <begin position="1"/>
        <end position="12"/>
    </location>
</feature>
<feature type="transmembrane region" description="Helical" evidence="1">
    <location>
        <begin position="13"/>
        <end position="33"/>
    </location>
</feature>
<feature type="topological domain" description="Periplasmic" evidence="1">
    <location>
        <begin position="34"/>
        <end position="47" status="greater than"/>
    </location>
</feature>
<feature type="binding site" description="axial binding residue" evidence="1">
    <location>
        <position position="29"/>
    </location>
    <ligand>
        <name>a bacteriochlorophyll</name>
        <dbReference type="ChEBI" id="CHEBI:38201"/>
    </ligand>
    <ligandPart>
        <name>Mg</name>
        <dbReference type="ChEBI" id="CHEBI:25107"/>
    </ligandPart>
</feature>
<feature type="non-terminal residue">
    <location>
        <position position="47"/>
    </location>
</feature>
<organism>
    <name type="scientific">Halorhodospira halophila (strain DSM 244 / SL1)</name>
    <name type="common">Ectothiorhodospira halophila (strain DSM 244 / SL1)</name>
    <dbReference type="NCBI Taxonomy" id="349124"/>
    <lineage>
        <taxon>Bacteria</taxon>
        <taxon>Pseudomonadati</taxon>
        <taxon>Pseudomonadota</taxon>
        <taxon>Gammaproteobacteria</taxon>
        <taxon>Chromatiales</taxon>
        <taxon>Ectothiorhodospiraceae</taxon>
        <taxon>Halorhodospira</taxon>
    </lineage>
</organism>
<proteinExistence type="evidence at protein level"/>
<protein>
    <recommendedName>
        <fullName>Light-harvesting protein B800/850/890 alpha-2 chain</fullName>
    </recommendedName>
    <alternativeName>
        <fullName>Antenna pigment protein alpha-2 chain</fullName>
    </alternativeName>
    <alternativeName>
        <fullName>EHA-alpha-2</fullName>
    </alternativeName>
</protein>
<sequence length="47" mass="5563">MWRMWKILDYRRTVVLAHVGMAVLALLIHFILLSTESFNWLEGNPYG</sequence>
<keyword id="KW-0042">Antenna complex</keyword>
<keyword id="KW-0076">Bacteriochlorophyll</keyword>
<keyword id="KW-0997">Cell inner membrane</keyword>
<keyword id="KW-1003">Cell membrane</keyword>
<keyword id="KW-0148">Chlorophyll</keyword>
<keyword id="KW-0157">Chromophore</keyword>
<keyword id="KW-0903">Direct protein sequencing</keyword>
<keyword id="KW-0437">Light-harvesting polypeptide</keyword>
<keyword id="KW-0460">Magnesium</keyword>
<keyword id="KW-0472">Membrane</keyword>
<keyword id="KW-0479">Metal-binding</keyword>
<keyword id="KW-0812">Transmembrane</keyword>
<keyword id="KW-1133">Transmembrane helix</keyword>
<name>LHA2_HALHL</name>
<evidence type="ECO:0000255" key="1"/>
<evidence type="ECO:0000305" key="2"/>
<comment type="function">
    <text>Antenna complexes are light-harvesting systems, which transfer the excitation energy to the reaction centers.</text>
</comment>
<comment type="subunit">
    <text>The core complex is formed by different alpha and beta chains, binding bacteriochlorophyll molecules, and arranged most probably in tetrameric structures disposed around the reaction center. The non-pigmented gamma chains may constitute additional components.</text>
</comment>
<comment type="subcellular location">
    <subcellularLocation>
        <location>Cell inner membrane</location>
        <topology>Single-pass type II membrane protein</topology>
    </subcellularLocation>
</comment>
<comment type="similarity">
    <text evidence="2">Belongs to the antenna complex alpha subunit family.</text>
</comment>
<reference key="1">
    <citation type="journal article" date="1992" name="Eur. J. Biochem.">
        <title>The primary structure of the antenna polypeptides of Ectothiorhodospira halochloris and Ectothiorhodospira halophila. Four core-type antenna polypeptides in E. halochloris and E. halophila.</title>
        <authorList>
            <person name="Wagner-Huber R."/>
            <person name="Brunisholz R.A."/>
            <person name="Bissig I."/>
            <person name="Frank G."/>
            <person name="Suter F."/>
            <person name="Zuber H."/>
        </authorList>
    </citation>
    <scope>PROTEIN SEQUENCE</scope>
</reference>
<accession>P80101</accession>